<keyword id="KW-0002">3D-structure</keyword>
<keyword id="KW-0007">Acetylation</keyword>
<keyword id="KW-0010">Activator</keyword>
<keyword id="KW-0025">Alternative splicing</keyword>
<keyword id="KW-0963">Cytoplasm</keyword>
<keyword id="KW-0217">Developmental protein</keyword>
<keyword id="KW-0903">Direct protein sequencing</keyword>
<keyword id="KW-0238">DNA-binding</keyword>
<keyword id="KW-0539">Nucleus</keyword>
<keyword id="KW-0597">Phosphoprotein</keyword>
<keyword id="KW-1267">Proteomics identification</keyword>
<keyword id="KW-1185">Reference proteome</keyword>
<keyword id="KW-0677">Repeat</keyword>
<keyword id="KW-0804">Transcription</keyword>
<keyword id="KW-0805">Transcription regulation</keyword>
<keyword id="KW-0832">Ubl conjugation</keyword>
<comment type="function">
    <text evidence="1 3 6 8">Acts as a regulator of transcriptional activation. Binds to the TNFSF11/RANKL promoter region and promotes TNFSF11 transcription (By similarity). Binding to the TNFSF11 promoter region is increased by high levels of Ca(2+) which induce NFATC3 expression and may lead to regulation of TNFSF11 expression in osteoblasts (By similarity). Plays a role in promoting mesenteric arterial wall remodeling in response to the intermittent hypoxia-induced increase in EDN1 and ROCK signaling (By similarity). As a result NFATC3 colocalizes with F-actin filaments, translocates to the nucleus and promotes transcription of the smooth muscle hypertrophy and differentiation marker ACTA2 (By similarity). Promotes lipopolysaccharide-induced apoptosis and hypertrophy in cardiomyocytes (By similarity). Following JAK/STAT signaling activation and as part of a complex with NFATC4 and STAT3, binds to the alpha-beta E4 promoter region of CRYAB and activates transcription in cardiomyocytes (By similarity). In conjunction with NFATC4, involved in embryonic heart development via maintenance of cardiomyocyte survival, proliferation and differentiation (By similarity). Plays a role in the inducible expression of cytokine genes in T-cells, especially in the induction of the IL-2 (PubMed:18815128). Required for thymocyte maturation during DN3 to DN4 transition and during positive selection (By similarity). Positively regulates macrophage-derived polymicrobial clearance, via binding to the promoter region and promoting transcription of NOS2 resulting in subsequent generation of nitric oxide (By similarity). Involved in Ca(2+)-mediated transcriptional responses upon Ca(2+) influx via ORAI1 CRAC channels.</text>
</comment>
<comment type="subunit">
    <text evidence="3 7 10">NFATC proteins bind to DNA as monomers (PubMed:7749981). Member of the multicomponent NFATC transcription complex that consists of at least two components, a pre-existing cytoplasmic component NFATC2 and an inducible nuclear component NFATC1 (By similarity). Other members such as NFATC4, or members of the activating protein-1 family, MAF, GATA4 and Cbp/p300 can also bind the complex (By similarity). Component of a promoter-binding complex composed of STAT3, NFATC3 and NFATC4; complex formation is enhanced by calcineurin (By similarity). Interacts with TRIM17; this interaction prevents NFATC3 nuclear localization (By similarity). Interacts with and ubiquitinated by STUB1/CHIP; HSPA1A/HSP70 is required as a co-chaperone (PubMed:30980393).</text>
</comment>
<comment type="interaction">
    <interactant intactId="EBI-5278441">
        <id>Q12968</id>
    </interactant>
    <interactant intactId="EBI-365996">
        <id>P04049</id>
        <label>RAF1</label>
    </interactant>
    <organismsDiffer>false</organismsDiffer>
    <experiments>2</experiments>
</comment>
<comment type="interaction">
    <interactant intactId="EBI-5278441">
        <id>Q12968</id>
    </interactant>
    <interactant intactId="EBI-740595">
        <id>Q9UMX1</id>
        <label>SUFU</label>
    </interactant>
    <organismsDiffer>false</organismsDiffer>
    <experiments>2</experiments>
</comment>
<comment type="subcellular location">
    <subcellularLocation>
        <location evidence="6">Cytoplasm</location>
    </subcellularLocation>
    <subcellularLocation>
        <location evidence="6">Nucleus</location>
    </subcellularLocation>
    <text evidence="3">The subcellular localization of NFATC plays a key role in the regulation of gene transcription (By similarity). Rapid nuclear exit of NFATC is thought to be one mechanism by which cells distinguish between sustained and transient calcium signals (By similarity). Cytoplasmic when phosphorylated and nuclear after activation, that is controlled by calcineurin-mediated dephosphorylation (By similarity). Translocation to the nucleus is increased in the presence of calcium in pre-osteoblasts (By similarity). Translocates to the nucleus in the presence of EDN1 following colocalization with F-actin filaments, translocation is ROCK-dependent (By similarity). Translocates to the nucleus in response to lipopolysaccharide treatment of macrophages (By similarity).</text>
</comment>
<comment type="alternative products">
    <event type="alternative splicing"/>
    <isoform>
        <id>Q12968-1</id>
        <name>1</name>
        <name>X1</name>
        <sequence type="displayed"/>
    </isoform>
    <isoform>
        <id>Q12968-2</id>
        <name>2</name>
        <name>X2</name>
        <name>C</name>
        <sequence type="described" ref="VSP_005600"/>
    </isoform>
    <isoform>
        <id>Q12968-3</id>
        <name>3</name>
        <name>X3</name>
        <sequence type="described" ref="VSP_005601"/>
    </isoform>
    <isoform>
        <id>Q12968-4</id>
        <name>4</name>
        <name>X4</name>
        <sequence type="described" ref="VSP_005602"/>
    </isoform>
    <isoform>
        <id>Q12968-5</id>
        <name>5</name>
        <name>A</name>
        <sequence type="described" ref="VSP_005598"/>
    </isoform>
    <isoform>
        <id>Q12968-6</id>
        <name>6</name>
        <name>B</name>
        <sequence type="described" ref="VSP_005599"/>
    </isoform>
</comment>
<comment type="tissue specificity">
    <molecule>Isoform 1</molecule>
    <text evidence="12">Predominantly expressed in thymus and is also found in peripheral blood leukocytes and kidney.</text>
</comment>
<comment type="tissue specificity">
    <molecule>Isoform 2</molecule>
    <text evidence="12">Predominantly expressed in skeletal muscle (PubMed:9759864). Also found weakly expressed in the thymus, kidney, testis, spleen, prostate, ovary, small intestine, heart, placenta and pancreas (PubMed:9759864).</text>
</comment>
<comment type="tissue specificity">
    <molecule>Isoform 3</molecule>
    <text evidence="12">Expressed in thymus and kidney.</text>
</comment>
<comment type="tissue specificity">
    <molecule>Isoform 4</molecule>
    <text evidence="12">Expressed in thymus and skeletal muscle.</text>
</comment>
<comment type="domain">
    <text evidence="18">Rel Similarity Domain (RSD) allows DNA-binding and cooperative interactions with AP1 factors.</text>
</comment>
<comment type="PTM">
    <text evidence="7">Ubiquitinated by STUB1/CHIP, leading to proteasomal degradation.</text>
</comment>
<comment type="PTM">
    <text evidence="18">Phosphorylated by NFATC-kinase; dephosphorylated by calcineurin.</text>
</comment>
<reference key="1">
    <citation type="journal article" date="1995" name="Immunity">
        <title>Isolation of two new members of the NF-AT gene family and functional characterization of the NF-AT proteins.</title>
        <authorList>
            <person name="Hoey T."/>
            <person name="Sun Y.-L."/>
            <person name="Williamson K."/>
            <person name="Xu X."/>
        </authorList>
    </citation>
    <scope>NUCLEOTIDE SEQUENCE [MRNA] (ISOFORMS 2; 5 AND 6)</scope>
    <scope>SUBUNIT</scope>
    <source>
        <tissue>Skeletal muscle</tissue>
        <tissue>T-cell</tissue>
    </source>
</reference>
<reference key="2">
    <citation type="journal article" date="1995" name="Mol. Cell. Biol.">
        <title>NFATx, a novel member of the nuclear factor of activated T cells family that is expressed predominantly in the thymus.</title>
        <authorList>
            <person name="Masuda E.S."/>
            <person name="Naito Y."/>
            <person name="Tokumitsu H."/>
            <person name="Campbell D."/>
            <person name="Saito F."/>
            <person name="Hannum C."/>
            <person name="Arai K."/>
            <person name="Arai N."/>
        </authorList>
    </citation>
    <scope>NUCLEOTIDE SEQUENCE [MRNA] (ISOFORM 1)</scope>
    <source>
        <tissue>T-cell</tissue>
    </source>
</reference>
<reference key="3">
    <citation type="journal article" date="1998" name="J. Immunol.">
        <title>Carboxy-terminal 15 amino acids sequence of NFATx1 is possibly created by tissue-specific splicing and is essential for transactivation activity in T cells.</title>
        <authorList>
            <person name="Imamura R."/>
            <person name="Masuda E.S."/>
            <person name="Naito Y."/>
            <person name="Imai S."/>
            <person name="Fujino T."/>
            <person name="Takano T."/>
            <person name="Arai K."/>
            <person name="Arai N."/>
        </authorList>
    </citation>
    <scope>NUCLEOTIDE SEQUENCE [MRNA] (ISOFORMS 2; 3 AND 4)</scope>
    <scope>TISSUE SPECIFICITY (ISOFORMS 1; 2; 3 AND 4)</scope>
    <source>
        <tissue>Fibroblast</tissue>
        <tissue>T-cell</tissue>
    </source>
</reference>
<reference key="4">
    <citation type="journal article" date="1999" name="Genomics">
        <title>Genome duplications and other features in 12 Mb of DNA sequence from human chromosome 16p and 16q.</title>
        <authorList>
            <person name="Loftus B.J."/>
            <person name="Kim U.-J."/>
            <person name="Sneddon V.P."/>
            <person name="Kalush F."/>
            <person name="Brandon R."/>
            <person name="Fuhrmann J."/>
            <person name="Mason T."/>
            <person name="Crosby M.L."/>
            <person name="Barnstead M."/>
            <person name="Cronin L."/>
            <person name="Mays A.D."/>
            <person name="Cao Y."/>
            <person name="Xu R.X."/>
            <person name="Kang H.-L."/>
            <person name="Mitchell S."/>
            <person name="Eichler E.E."/>
            <person name="Harris P.C."/>
            <person name="Venter J.C."/>
            <person name="Adams M.D."/>
        </authorList>
    </citation>
    <scope>NUCLEOTIDE SEQUENCE [LARGE SCALE GENOMIC DNA] (ISOFORM 4)</scope>
</reference>
<reference key="5">
    <citation type="journal article" date="2004" name="Genome Res.">
        <title>The status, quality, and expansion of the NIH full-length cDNA project: the Mammalian Gene Collection (MGC).</title>
        <authorList>
            <consortium name="The MGC Project Team"/>
        </authorList>
    </citation>
    <scope>NUCLEOTIDE SEQUENCE [LARGE SCALE MRNA] (ISOFORM 1)</scope>
    <source>
        <tissue>Kidney</tissue>
    </source>
</reference>
<reference key="6">
    <citation type="submission" date="2009-03" db="UniProtKB">
        <authorList>
            <person name="Bienvenut W.V."/>
            <person name="Waridel P."/>
            <person name="Quadroni M."/>
        </authorList>
    </citation>
    <scope>PROTEIN SEQUENCE OF 2-15; 468-488; 505-519 AND 579-594</scope>
    <scope>CLEAVAGE OF INITIATOR METHIONINE</scope>
    <scope>ACETYLATION AT THR-2</scope>
    <scope>IDENTIFICATION BY MASS SPECTROMETRY</scope>
    <source>
        <tissue>Embryonic kidney</tissue>
    </source>
</reference>
<reference key="7">
    <citation type="journal article" date="1998" name="Cell">
        <title>Intramolecular masking of nuclear import signal on NF-AT4 by casein kinase I and MEKK1.</title>
        <authorList>
            <person name="Zhu J."/>
            <person name="Shibasaki F."/>
            <person name="Price R."/>
            <person name="Guillemot J.-C."/>
            <person name="Yano T."/>
            <person name="Doetsch V."/>
            <person name="Wagner G."/>
            <person name="Ferrara P."/>
            <person name="McKeon F."/>
        </authorList>
    </citation>
    <scope>MUTAGENESIS</scope>
</reference>
<reference key="8">
    <citation type="journal article" date="1999" name="Cell">
        <title>Generic signals and specific outcomes: signaling through Ca2+, calcineurin, and NF-AT.</title>
        <authorList>
            <person name="Crabtree G.R."/>
        </authorList>
    </citation>
    <scope>REVIEW</scope>
    <scope>PHOSPHORYLATION</scope>
</reference>
<reference key="9">
    <citation type="journal article" date="2008" name="J. Biol. Chem.">
        <title>CHP2 activates the calcineurin/nuclear factor of activated T cells signaling pathway and enhances the oncogenic potential of HEK293 cells.</title>
        <authorList>
            <person name="Li G.D."/>
            <person name="Zhang X."/>
            <person name="Li R."/>
            <person name="Wang Y.D."/>
            <person name="Wang Y.L."/>
            <person name="Han K.J."/>
            <person name="Qian X.P."/>
            <person name="Yang C.G."/>
            <person name="Liu P."/>
            <person name="Wei Q."/>
            <person name="Chen W.F."/>
            <person name="Zhang J."/>
            <person name="Zhang Y."/>
        </authorList>
    </citation>
    <scope>FUNCTION</scope>
    <scope>SUBCELLULAR LOCATION</scope>
</reference>
<reference key="10">
    <citation type="journal article" date="2013" name="J. Proteome Res.">
        <title>Toward a comprehensive characterization of a human cancer cell phosphoproteome.</title>
        <authorList>
            <person name="Zhou H."/>
            <person name="Di Palma S."/>
            <person name="Preisinger C."/>
            <person name="Peng M."/>
            <person name="Polat A.N."/>
            <person name="Heck A.J."/>
            <person name="Mohammed S."/>
        </authorList>
    </citation>
    <scope>PHOSPHORYLATION [LARGE SCALE ANALYSIS] AT SER-372; SER-1063 AND SER-1066</scope>
    <scope>IDENTIFICATION BY MASS SPECTROMETRY [LARGE SCALE ANALYSIS]</scope>
    <source>
        <tissue>Cervix carcinoma</tissue>
        <tissue>Erythroleukemia</tissue>
    </source>
</reference>
<reference key="11">
    <citation type="journal article" date="2019" name="J. Cell. Physiol.">
        <title>CHIP attenuates lipopolysaccharide-induced cardiac hypertrophy and apoptosis by promoting NFATc3 proteasomal degradation.</title>
        <authorList>
            <person name="Chao C.N."/>
            <person name="Lai C.H."/>
            <person name="Badrealam K.F."/>
            <person name="Lo J.F."/>
            <person name="Shen C.Y."/>
            <person name="Chen C.H."/>
            <person name="Chen R.J."/>
            <person name="Viswanadha V.P."/>
            <person name="Kuo W.W."/>
            <person name="Huang C.Y."/>
        </authorList>
    </citation>
    <scope>INTERACTION WITH STUB1</scope>
    <scope>UBIQUITINATION</scope>
</reference>
<reference key="12">
    <citation type="journal article" date="2020" name="Nat. Commun.">
        <title>The native ORAI channel trio underlies the diversity of Ca2+ signaling events.</title>
        <authorList>
            <person name="Yoast R.E."/>
            <person name="Emrich S.M."/>
            <person name="Zhang X."/>
            <person name="Xin P."/>
            <person name="Johnson M.T."/>
            <person name="Fike A.J."/>
            <person name="Walter V."/>
            <person name="Hempel N."/>
            <person name="Yule D.I."/>
            <person name="Sneyd J."/>
            <person name="Gill D.L."/>
            <person name="Trebak M."/>
        </authorList>
    </citation>
    <scope>FUNCTION</scope>
</reference>
<sequence length="1075" mass="115594">MTTANCGAHDELDFKLVFGEDGAPAPPPPGSRPADLEPDDCASIYIFNVDPPPSTLTTPLCLPHHGLPSHSSVLSPSFQLQSHKNYEGTCEIPESKYSPLGGPKPFECPSIQITSISPNCHQELDAHEDDLQINDPEREFLERPSRDHLYLPLEPSYRESSLSPSPASSISSRSWFSDASSCESLSHIYDDVDSELNEAAARFTLGSPLTSPGGSPGGCPGEETWHQQYGLGHSLSPRQSPCHSPRSSVTDENWLSPRPASGPSSRPTSPCGKRRHSSAEVCYAGSLSPHHSPVPSPGHSPRGSVTEDTWLNASVHGGSGLGPAVFPFQYCVETDIPLKTRKTSEDQAAILPGKLELCSDDQGSLSPARETSIDDGLGSQYPLKKDSCGDQFLSVPSPFTWSKPKPGHTPIFRTSSLPPLDWPLPAHFGQCELKIEVQPKTHHRAHYETEGSRGAVKASTGGHPVVKLLGYNEKPINLQMFIGTADDRYLRPHAFYQVHRITGKTVATASQEIIIASTKVLEIPLLPENNMSASIDCAGILKLRNSDIELRKGETDIGRKNTRVRLVFRVHIPQPSGKVLSLQIASIPVECSQRSAQELPHIEKYSINSCSVNGGHEMVVTGSNFLPESKIIFLEKGQDGRPQWEVEGKIIREKCQGAHIVLEVPPYHNPAVTAAVQVHFYLCNGKRKKSQSQRFTYTPVLMKQEHREEIDLSSVPSLPVPHPAQTQRPSSDSGCSHDSVLSGQRSLICSIPQTYASMVTSSHLPQLQCRDESVSKEQHMIPSPIVHQPFQVTPTPPVGSSYQPMQTNVVYNGPTCLPINAASSQEFDSVLFQQDATLSGLVNLGCQPLSSIPFHSSNSGSTGHLLAHTPHSVHTLPHLQSMGYHCSNTGQRSLSSPVADQITGQPSSQLQPITYGPSHSGSATTASPAASHPLASSPLSGPPSPQLQPMPYQSPSSGTASSPSPATRMHSGQHSTQAQSTGQGGLSAPSSLICHSLCDPASFPPDGATVSIKPEPEDREPNFATIGLQDITLDDVNEIIGRDMSQISVSQGAGVSRQAPLPSPESLDLGRSDGL</sequence>
<feature type="initiator methionine" description="Removed" evidence="13">
    <location>
        <position position="1"/>
    </location>
</feature>
<feature type="chain" id="PRO_0000205180" description="Nuclear factor of activated T-cells, cytoplasmic 3">
    <location>
        <begin position="2"/>
        <end position="1075"/>
    </location>
</feature>
<feature type="repeat" description="1" evidence="9">
    <location>
        <begin position="207"/>
        <end position="223"/>
    </location>
</feature>
<feature type="repeat" description="2" evidence="9">
    <location>
        <begin position="236"/>
        <end position="252"/>
    </location>
</feature>
<feature type="repeat" description="3" evidence="9">
    <location>
        <begin position="292"/>
        <end position="308"/>
    </location>
</feature>
<feature type="domain" description="RHD" evidence="4">
    <location>
        <begin position="415"/>
        <end position="596"/>
    </location>
</feature>
<feature type="DNA-binding region" evidence="2">
    <location>
        <begin position="444"/>
        <end position="451"/>
    </location>
</feature>
<feature type="region of interest" description="Disordered" evidence="5">
    <location>
        <begin position="18"/>
        <end position="37"/>
    </location>
</feature>
<feature type="region of interest" description="Calcineurin-binding" evidence="11">
    <location>
        <begin position="109"/>
        <end position="114"/>
    </location>
</feature>
<feature type="region of interest" description="Disordered" evidence="5">
    <location>
        <begin position="205"/>
        <end position="306"/>
    </location>
</feature>
<feature type="region of interest" description="3 X SP repeats" evidence="9">
    <location>
        <begin position="207"/>
        <end position="308"/>
    </location>
</feature>
<feature type="region of interest" description="Disordered" evidence="5">
    <location>
        <begin position="711"/>
        <end position="739"/>
    </location>
</feature>
<feature type="region of interest" description="Disordered" evidence="5">
    <location>
        <begin position="887"/>
        <end position="988"/>
    </location>
</feature>
<feature type="region of interest" description="Disordered" evidence="5">
    <location>
        <begin position="1049"/>
        <end position="1075"/>
    </location>
</feature>
<feature type="short sequence motif" description="Nuclear localization signal" evidence="11">
    <location>
        <begin position="273"/>
        <end position="275"/>
    </location>
</feature>
<feature type="short sequence motif" description="Nuclear localization signal" evidence="9">
    <location>
        <begin position="686"/>
        <end position="688"/>
    </location>
</feature>
<feature type="short sequence motif" description="Nuclear export signal">
    <location>
        <begin position="1032"/>
        <end position="1041"/>
    </location>
</feature>
<feature type="compositionally biased region" description="Polar residues" evidence="5">
    <location>
        <begin position="236"/>
        <end position="253"/>
    </location>
</feature>
<feature type="compositionally biased region" description="Low complexity" evidence="5">
    <location>
        <begin position="256"/>
        <end position="270"/>
    </location>
</feature>
<feature type="compositionally biased region" description="Polar residues" evidence="5">
    <location>
        <begin position="724"/>
        <end position="739"/>
    </location>
</feature>
<feature type="compositionally biased region" description="Polar residues" evidence="5">
    <location>
        <begin position="887"/>
        <end position="912"/>
    </location>
</feature>
<feature type="compositionally biased region" description="Low complexity" evidence="5">
    <location>
        <begin position="916"/>
        <end position="939"/>
    </location>
</feature>
<feature type="compositionally biased region" description="Low complexity" evidence="5">
    <location>
        <begin position="949"/>
        <end position="967"/>
    </location>
</feature>
<feature type="compositionally biased region" description="Polar residues" evidence="5">
    <location>
        <begin position="970"/>
        <end position="981"/>
    </location>
</feature>
<feature type="modified residue" description="N-acetylthreonine" evidence="13">
    <location>
        <position position="2"/>
    </location>
</feature>
<feature type="modified residue" description="Phosphoserine" evidence="3">
    <location>
        <position position="344"/>
    </location>
</feature>
<feature type="modified residue" description="Phosphoserine" evidence="20">
    <location>
        <position position="372"/>
    </location>
</feature>
<feature type="modified residue" description="Phosphoserine" evidence="20">
    <location>
        <position position="1063"/>
    </location>
</feature>
<feature type="modified residue" description="Phosphoserine" evidence="20">
    <location>
        <position position="1066"/>
    </location>
</feature>
<feature type="splice variant" id="VSP_005598" description="In isoform 5." evidence="15">
    <original>VLMKQEHREEIDLSSVPSLPVPHPAQTQRPSSDSGCSHDSVLSGQRSLICSIPQTYASMVTSSHLPQLQCRDESVSKEQHMIPSPIVHQPFQVTPTPPVGSSYQPMQTNVVYNGPTCLPINAASSQEFDSVLFQQDATLSGLVNLGCQPLSSIPFHSSNSGSTGHLLAHTPHSVHTLPHLQSMGYHCSNTGQRSLSSPVADQITGQPSSQLQPITYGPSHSGSATTASPAASHPLASSPLSGPPSPQLQPMPYQSPSSGTASSPSPATRMHSGQHSTQAQSTGQGGLSAPSSLICHSLCDPASFPPDGATVSIKPEPEDREPNFATIGLQDITLDDVNEIIGRDMSQISVSQGAGVSRQAPLPSPESLDLGRSDGL</original>
    <variation>GTRSHDGLL</variation>
    <location>
        <begin position="700"/>
        <end position="1075"/>
    </location>
</feature>
<feature type="splice variant" id="VSP_005599" description="In isoform 6." evidence="15">
    <original>SLPVPHPAQTQRPSSDSGCSHDSVLSGQRSLICSIPQTYASMVTSSHLPQLQCRDESVSKEQHMIPSPIVHQPFQVTPTPPVGSSYQPMQTNVVYNGPTCLPINAASSQEFDSVLFQQDATLSGLVNLGCQPLSSIPFHSSNSGSTGHLLAHTPHSVHTLPHLQSMGYHCSNTGQRSLSSPVADQITGQPSSQLQPITYGPSHSGSATTASPAASHPLASSPLSGPPSPQLQPMPYQSPSSGTASSPSPATRMHSGQHSTQAQSTGQGGLSAPSSLICHSLCDPASFPPDGATVSIKPEPEDREPNFATIGLQDITLDDVNEIIGRDMSQISVSQGAGVSRQAPLPSPESLDLGRSDGL</original>
    <variation>TLPQTSRQTLLGSQPPSASPPTV</variation>
    <location>
        <begin position="717"/>
        <end position="1075"/>
    </location>
</feature>
<feature type="splice variant" id="VSP_005600" description="In isoform 2." evidence="15 16">
    <original>VNEIIGRDMSQISVSQGAGVSRQAPLPSPESLDLGRSDGL</original>
    <variation>DQFISDLEHQPSGSAEKWPNHSVLSCPAPFWRI</variation>
    <location>
        <begin position="1036"/>
        <end position="1075"/>
    </location>
</feature>
<feature type="splice variant" id="VSP_005601" description="In isoform 3." evidence="16">
    <original>VNEIIGRDMSQISVSQGAGVSRQAPLPSPESLDLGRSDGL</original>
    <variation>DLFTSNNFDLLQLRPTFWPVPAGRYLRNLE</variation>
    <location>
        <begin position="1036"/>
        <end position="1075"/>
    </location>
</feature>
<feature type="splice variant" id="VSP_005602" description="In isoform 4." evidence="16">
    <original>VNEIIGRDMSQISVSQGAGVSRQAPLPSPESLDLGRSDGL</original>
    <variation>GKFISDMFLK</variation>
    <location>
        <begin position="1036"/>
        <end position="1075"/>
    </location>
</feature>
<feature type="sequence variant" id="VAR_051784" description="In dbSNP:rs2230092.">
    <original>S</original>
    <variation>L</variation>
    <location>
        <position position="75"/>
    </location>
</feature>
<feature type="sequence variant" id="VAR_051785" description="In dbSNP:rs3743736.">
    <original>E</original>
    <variation>A</variation>
    <location>
        <position position="94"/>
    </location>
</feature>
<feature type="sequence variant" id="VAR_051786" description="In dbSNP:rs2230093.">
    <original>L</original>
    <variation>S</variation>
    <location>
        <position position="100"/>
    </location>
</feature>
<feature type="sequence variant" id="VAR_051787" description="In dbSNP:rs2230094.">
    <original>P</original>
    <variation>L</variation>
    <location>
        <position position="136"/>
    </location>
</feature>
<feature type="sequence variant" id="VAR_051788" description="In dbSNP:rs2230095.">
    <original>P</original>
    <variation>S</variation>
    <location>
        <position position="382"/>
    </location>
</feature>
<feature type="sequence conflict" description="In Ref. 3; AAB46595/AAB46596/AAB46597." evidence="17" ref="3">
    <original>M</original>
    <variation>L</variation>
    <location>
        <position position="702"/>
    </location>
</feature>
<feature type="sequence conflict" description="In Ref. 3; AAB46595/AAB46596/AAB46597." evidence="17" ref="3">
    <original>L</original>
    <variation>W</variation>
    <location>
        <position position="831"/>
    </location>
</feature>
<feature type="sequence conflict" description="In Ref. 3; AAB46595/AAB46596/AAB46597." evidence="17" ref="3">
    <original>A</original>
    <variation>G</variation>
    <location>
        <position position="899"/>
    </location>
</feature>
<feature type="sequence conflict" description="In Ref. 3; AAB46595/AAB46596/AAB46597." evidence="17" ref="3">
    <original>A</original>
    <variation>V</variation>
    <location>
        <position position="923"/>
    </location>
</feature>
<feature type="sequence conflict" description="In Ref. 3; AAB46595/AAB46596/AAB46597." evidence="17" ref="3">
    <original>A</original>
    <variation>G</variation>
    <location>
        <position position="935"/>
    </location>
</feature>
<feature type="sequence conflict" description="In Ref. 3; AAB46595/AAB46596/AAB46597." evidence="17" ref="3">
    <original>L</original>
    <variation>F</variation>
    <location>
        <position position="947"/>
    </location>
</feature>
<feature type="sequence conflict" description="In Ref. 3; AAB46595/AAB46596/AAB46597." evidence="17" ref="3">
    <original>A</original>
    <variation>G</variation>
    <location>
        <position position="960"/>
    </location>
</feature>
<feature type="helix" evidence="21">
    <location>
        <begin position="146"/>
        <end position="148"/>
    </location>
</feature>
<protein>
    <recommendedName>
        <fullName evidence="17">Nuclear factor of activated T-cells, cytoplasmic 3</fullName>
        <shortName>NF-ATc3</shortName>
        <shortName evidence="3">NFATc3</shortName>
    </recommendedName>
    <alternativeName>
        <fullName evidence="14">NFATx</fullName>
    </alternativeName>
    <alternativeName>
        <fullName evidence="15">T-cell transcription factor NFAT4</fullName>
        <shortName evidence="15">NF-AT4</shortName>
        <shortName evidence="15">NF-AT4c</shortName>
    </alternativeName>
</protein>
<accession>Q12968</accession>
<accession>O75211</accession>
<accession>Q14516</accession>
<accession>Q99840</accession>
<accession>Q99841</accession>
<accession>Q99842</accession>
<evidence type="ECO:0000250" key="1">
    <source>
        <dbReference type="UniProtKB" id="A0A0G2JTY4"/>
    </source>
</evidence>
<evidence type="ECO:0000250" key="2">
    <source>
        <dbReference type="UniProtKB" id="O95644"/>
    </source>
</evidence>
<evidence type="ECO:0000250" key="3">
    <source>
        <dbReference type="UniProtKB" id="P97305"/>
    </source>
</evidence>
<evidence type="ECO:0000255" key="4">
    <source>
        <dbReference type="PROSITE-ProRule" id="PRU00265"/>
    </source>
</evidence>
<evidence type="ECO:0000256" key="5">
    <source>
        <dbReference type="SAM" id="MobiDB-lite"/>
    </source>
</evidence>
<evidence type="ECO:0000269" key="6">
    <source>
    </source>
</evidence>
<evidence type="ECO:0000269" key="7">
    <source>
    </source>
</evidence>
<evidence type="ECO:0000269" key="8">
    <source>
    </source>
</evidence>
<evidence type="ECO:0000269" key="9">
    <source>
    </source>
</evidence>
<evidence type="ECO:0000269" key="10">
    <source>
    </source>
</evidence>
<evidence type="ECO:0000269" key="11">
    <source>
    </source>
</evidence>
<evidence type="ECO:0000269" key="12">
    <source>
    </source>
</evidence>
<evidence type="ECO:0000269" key="13">
    <source ref="6"/>
</evidence>
<evidence type="ECO:0000303" key="14">
    <source>
    </source>
</evidence>
<evidence type="ECO:0000303" key="15">
    <source>
    </source>
</evidence>
<evidence type="ECO:0000303" key="16">
    <source>
    </source>
</evidence>
<evidence type="ECO:0000305" key="17"/>
<evidence type="ECO:0000305" key="18">
    <source>
    </source>
</evidence>
<evidence type="ECO:0000312" key="19">
    <source>
        <dbReference type="HGNC" id="HGNC:7777"/>
    </source>
</evidence>
<evidence type="ECO:0007744" key="20">
    <source>
    </source>
</evidence>
<evidence type="ECO:0007829" key="21">
    <source>
        <dbReference type="PDB" id="2XRW"/>
    </source>
</evidence>
<gene>
    <name evidence="19" type="primary">NFATC3</name>
    <name evidence="15" type="synonym">NFAT4</name>
</gene>
<dbReference type="EMBL" id="L41067">
    <property type="protein sequence ID" value="AAA79174.1"/>
    <property type="molecule type" value="mRNA"/>
</dbReference>
<dbReference type="EMBL" id="U14510">
    <property type="protein sequence ID" value="AAA86308.1"/>
    <property type="molecule type" value="mRNA"/>
</dbReference>
<dbReference type="EMBL" id="U85428">
    <property type="protein sequence ID" value="AAB46595.1"/>
    <property type="molecule type" value="mRNA"/>
</dbReference>
<dbReference type="EMBL" id="U85429">
    <property type="protein sequence ID" value="AAB46596.1"/>
    <property type="molecule type" value="mRNA"/>
</dbReference>
<dbReference type="EMBL" id="U85430">
    <property type="protein sequence ID" value="AAB46597.1"/>
    <property type="molecule type" value="mRNA"/>
</dbReference>
<dbReference type="EMBL" id="AC130462">
    <property type="status" value="NOT_ANNOTATED_CDS"/>
    <property type="molecule type" value="Genomic_DNA"/>
</dbReference>
<dbReference type="EMBL" id="BC001050">
    <property type="protein sequence ID" value="AAH01050.1"/>
    <property type="molecule type" value="mRNA"/>
</dbReference>
<dbReference type="CCDS" id="CCDS10860.1">
    <molecule id="Q12968-1"/>
</dbReference>
<dbReference type="CCDS" id="CCDS10861.1">
    <molecule id="Q12968-3"/>
</dbReference>
<dbReference type="CCDS" id="CCDS10862.1">
    <molecule id="Q12968-2"/>
</dbReference>
<dbReference type="PIR" id="A57377">
    <property type="entry name" value="A57377"/>
</dbReference>
<dbReference type="RefSeq" id="NP_004546.1">
    <molecule id="Q12968-2"/>
    <property type="nucleotide sequence ID" value="NM_004555.4"/>
</dbReference>
<dbReference type="RefSeq" id="NP_775186.1">
    <molecule id="Q12968-3"/>
    <property type="nucleotide sequence ID" value="NM_173163.3"/>
</dbReference>
<dbReference type="RefSeq" id="NP_775188.1">
    <molecule id="Q12968-1"/>
    <property type="nucleotide sequence ID" value="NM_173165.3"/>
</dbReference>
<dbReference type="PDB" id="2XRW">
    <property type="method" value="X-ray"/>
    <property type="resolution" value="1.33 A"/>
    <property type="chains" value="B=141-154"/>
</dbReference>
<dbReference type="PDB" id="2XS0">
    <property type="method" value="X-ray"/>
    <property type="resolution" value="2.60 A"/>
    <property type="chains" value="B=141-154"/>
</dbReference>
<dbReference type="PDBsum" id="2XRW"/>
<dbReference type="PDBsum" id="2XS0"/>
<dbReference type="SMR" id="Q12968"/>
<dbReference type="BioGRID" id="110848">
    <property type="interactions" value="43"/>
</dbReference>
<dbReference type="ELM" id="Q12968"/>
<dbReference type="FunCoup" id="Q12968">
    <property type="interactions" value="3108"/>
</dbReference>
<dbReference type="IntAct" id="Q12968">
    <property type="interactions" value="24"/>
</dbReference>
<dbReference type="MINT" id="Q12968"/>
<dbReference type="STRING" id="9606.ENSP00000300659"/>
<dbReference type="GlyGen" id="Q12968">
    <property type="glycosylation" value="3 sites, 1 O-linked glycan (2 sites)"/>
</dbReference>
<dbReference type="iPTMnet" id="Q12968"/>
<dbReference type="PhosphoSitePlus" id="Q12968"/>
<dbReference type="BioMuta" id="NFATC3"/>
<dbReference type="DMDM" id="9087155"/>
<dbReference type="jPOST" id="Q12968"/>
<dbReference type="MassIVE" id="Q12968"/>
<dbReference type="PaxDb" id="9606-ENSP00000300659"/>
<dbReference type="PeptideAtlas" id="Q12968"/>
<dbReference type="ProteomicsDB" id="59061">
    <molecule id="Q12968-1"/>
</dbReference>
<dbReference type="ProteomicsDB" id="59062">
    <molecule id="Q12968-2"/>
</dbReference>
<dbReference type="ProteomicsDB" id="59063">
    <molecule id="Q12968-3"/>
</dbReference>
<dbReference type="ProteomicsDB" id="59064">
    <molecule id="Q12968-4"/>
</dbReference>
<dbReference type="ProteomicsDB" id="59065">
    <molecule id="Q12968-5"/>
</dbReference>
<dbReference type="ProteomicsDB" id="59066">
    <molecule id="Q12968-6"/>
</dbReference>
<dbReference type="Pumba" id="Q12968"/>
<dbReference type="Antibodypedia" id="3861">
    <property type="antibodies" value="317 antibodies from 38 providers"/>
</dbReference>
<dbReference type="DNASU" id="4775"/>
<dbReference type="Ensembl" id="ENST00000329524.8">
    <molecule id="Q12968-2"/>
    <property type="protein sequence ID" value="ENSP00000331324.4"/>
    <property type="gene ID" value="ENSG00000072736.19"/>
</dbReference>
<dbReference type="Ensembl" id="ENST00000346183.8">
    <molecule id="Q12968-1"/>
    <property type="protein sequence ID" value="ENSP00000300659.5"/>
    <property type="gene ID" value="ENSG00000072736.19"/>
</dbReference>
<dbReference type="Ensembl" id="ENST00000349223.9">
    <molecule id="Q12968-3"/>
    <property type="protein sequence ID" value="ENSP00000264008.6"/>
    <property type="gene ID" value="ENSG00000072736.19"/>
</dbReference>
<dbReference type="GeneID" id="4775"/>
<dbReference type="KEGG" id="hsa:4775"/>
<dbReference type="MANE-Select" id="ENST00000346183.8">
    <property type="protein sequence ID" value="ENSP00000300659.5"/>
    <property type="RefSeq nucleotide sequence ID" value="NM_173165.3"/>
    <property type="RefSeq protein sequence ID" value="NP_775188.1"/>
</dbReference>
<dbReference type="UCSC" id="uc002evm.3">
    <molecule id="Q12968-1"/>
    <property type="organism name" value="human"/>
</dbReference>
<dbReference type="AGR" id="HGNC:7777"/>
<dbReference type="CTD" id="4775"/>
<dbReference type="DisGeNET" id="4775"/>
<dbReference type="GeneCards" id="NFATC3"/>
<dbReference type="HGNC" id="HGNC:7777">
    <property type="gene designation" value="NFATC3"/>
</dbReference>
<dbReference type="HPA" id="ENSG00000072736">
    <property type="expression patterns" value="Tissue enhanced (lymphoid)"/>
</dbReference>
<dbReference type="MIM" id="602698">
    <property type="type" value="gene"/>
</dbReference>
<dbReference type="neXtProt" id="NX_Q12968"/>
<dbReference type="OpenTargets" id="ENSG00000072736"/>
<dbReference type="PharmGKB" id="PA247"/>
<dbReference type="VEuPathDB" id="HostDB:ENSG00000072736"/>
<dbReference type="eggNOG" id="ENOG502QWQ4">
    <property type="taxonomic scope" value="Eukaryota"/>
</dbReference>
<dbReference type="GeneTree" id="ENSGT00940000156131"/>
<dbReference type="InParanoid" id="Q12968"/>
<dbReference type="OMA" id="QPMPYQT"/>
<dbReference type="OrthoDB" id="5346094at2759"/>
<dbReference type="PAN-GO" id="Q12968">
    <property type="GO annotations" value="7 GO annotations based on evolutionary models"/>
</dbReference>
<dbReference type="PhylomeDB" id="Q12968"/>
<dbReference type="TreeFam" id="TF326480"/>
<dbReference type="PathwayCommons" id="Q12968"/>
<dbReference type="Reactome" id="R-HSA-2025928">
    <property type="pathway name" value="Calcineurin activates NFAT"/>
</dbReference>
<dbReference type="Reactome" id="R-HSA-2871809">
    <property type="pathway name" value="FCERI mediated Ca+2 mobilization"/>
</dbReference>
<dbReference type="Reactome" id="R-HSA-5607763">
    <property type="pathway name" value="CLEC7A (Dectin-1) induces NFAT activation"/>
</dbReference>
<dbReference type="SignaLink" id="Q12968"/>
<dbReference type="SIGNOR" id="Q12968"/>
<dbReference type="BioGRID-ORCS" id="4775">
    <property type="hits" value="12 hits in 1180 CRISPR screens"/>
</dbReference>
<dbReference type="ChiTaRS" id="NFATC3">
    <property type="organism name" value="human"/>
</dbReference>
<dbReference type="EvolutionaryTrace" id="Q12968"/>
<dbReference type="GeneWiki" id="NFATC3"/>
<dbReference type="GenomeRNAi" id="4775"/>
<dbReference type="Pharos" id="Q12968">
    <property type="development level" value="Tbio"/>
</dbReference>
<dbReference type="PRO" id="PR:Q12968"/>
<dbReference type="Proteomes" id="UP000005640">
    <property type="component" value="Chromosome 16"/>
</dbReference>
<dbReference type="RNAct" id="Q12968">
    <property type="molecule type" value="protein"/>
</dbReference>
<dbReference type="Bgee" id="ENSG00000072736">
    <property type="expression patterns" value="Expressed in oocyte and 205 other cell types or tissues"/>
</dbReference>
<dbReference type="ExpressionAtlas" id="Q12968">
    <property type="expression patterns" value="baseline and differential"/>
</dbReference>
<dbReference type="GO" id="GO:0000785">
    <property type="term" value="C:chromatin"/>
    <property type="evidence" value="ECO:0000247"/>
    <property type="project" value="NTNU_SB"/>
</dbReference>
<dbReference type="GO" id="GO:0005737">
    <property type="term" value="C:cytoplasm"/>
    <property type="evidence" value="ECO:0000314"/>
    <property type="project" value="UniProtKB"/>
</dbReference>
<dbReference type="GO" id="GO:0005829">
    <property type="term" value="C:cytosol"/>
    <property type="evidence" value="ECO:0000314"/>
    <property type="project" value="HPA"/>
</dbReference>
<dbReference type="GO" id="GO:0005654">
    <property type="term" value="C:nucleoplasm"/>
    <property type="evidence" value="ECO:0000314"/>
    <property type="project" value="HPA"/>
</dbReference>
<dbReference type="GO" id="GO:0005634">
    <property type="term" value="C:nucleus"/>
    <property type="evidence" value="ECO:0000314"/>
    <property type="project" value="UniProtKB"/>
</dbReference>
<dbReference type="GO" id="GO:0005667">
    <property type="term" value="C:transcription regulator complex"/>
    <property type="evidence" value="ECO:0000318"/>
    <property type="project" value="GO_Central"/>
</dbReference>
<dbReference type="GO" id="GO:0001228">
    <property type="term" value="F:DNA-binding transcription activator activity, RNA polymerase II-specific"/>
    <property type="evidence" value="ECO:0000314"/>
    <property type="project" value="NTNU_SB"/>
</dbReference>
<dbReference type="GO" id="GO:0000981">
    <property type="term" value="F:DNA-binding transcription factor activity, RNA polymerase II-specific"/>
    <property type="evidence" value="ECO:0000247"/>
    <property type="project" value="NTNU_SB"/>
</dbReference>
<dbReference type="GO" id="GO:0001227">
    <property type="term" value="F:DNA-binding transcription repressor activity, RNA polymerase II-specific"/>
    <property type="evidence" value="ECO:0000316"/>
    <property type="project" value="BHF-UCL"/>
</dbReference>
<dbReference type="GO" id="GO:0000978">
    <property type="term" value="F:RNA polymerase II cis-regulatory region sequence-specific DNA binding"/>
    <property type="evidence" value="ECO:0000314"/>
    <property type="project" value="NTNU_SB"/>
</dbReference>
<dbReference type="GO" id="GO:1990837">
    <property type="term" value="F:sequence-specific double-stranded DNA binding"/>
    <property type="evidence" value="ECO:0000314"/>
    <property type="project" value="ARUK-UCL"/>
</dbReference>
<dbReference type="GO" id="GO:0033173">
    <property type="term" value="P:calcineurin-NFAT signaling cascade"/>
    <property type="evidence" value="ECO:0000318"/>
    <property type="project" value="GO_Central"/>
</dbReference>
<dbReference type="GO" id="GO:1904157">
    <property type="term" value="P:DN4 thymocyte differentiation"/>
    <property type="evidence" value="ECO:0000250"/>
    <property type="project" value="UniProtKB"/>
</dbReference>
<dbReference type="GO" id="GO:0006954">
    <property type="term" value="P:inflammatory response"/>
    <property type="evidence" value="ECO:0000304"/>
    <property type="project" value="ProtInc"/>
</dbReference>
<dbReference type="GO" id="GO:1902894">
    <property type="term" value="P:negative regulation of miRNA transcription"/>
    <property type="evidence" value="ECO:0000316"/>
    <property type="project" value="BHF-UCL"/>
</dbReference>
<dbReference type="GO" id="GO:1905064">
    <property type="term" value="P:negative regulation of vascular associated smooth muscle cell differentiation"/>
    <property type="evidence" value="ECO:0000314"/>
    <property type="project" value="BHF-UCL"/>
</dbReference>
<dbReference type="GO" id="GO:1905653">
    <property type="term" value="P:positive regulation of artery morphogenesis"/>
    <property type="evidence" value="ECO:0000250"/>
    <property type="project" value="UniProtKB"/>
</dbReference>
<dbReference type="GO" id="GO:0045429">
    <property type="term" value="P:positive regulation of nitric oxide biosynthetic process"/>
    <property type="evidence" value="ECO:0000250"/>
    <property type="project" value="UniProtKB"/>
</dbReference>
<dbReference type="GO" id="GO:0045944">
    <property type="term" value="P:positive regulation of transcription by RNA polymerase II"/>
    <property type="evidence" value="ECO:0000314"/>
    <property type="project" value="UniProtKB"/>
</dbReference>
<dbReference type="GO" id="GO:0045059">
    <property type="term" value="P:positive thymic T cell selection"/>
    <property type="evidence" value="ECO:0000250"/>
    <property type="project" value="UniProtKB"/>
</dbReference>
<dbReference type="GO" id="GO:0006357">
    <property type="term" value="P:regulation of transcription by RNA polymerase II"/>
    <property type="evidence" value="ECO:0000304"/>
    <property type="project" value="ProtInc"/>
</dbReference>
<dbReference type="CDD" id="cd01178">
    <property type="entry name" value="IPT_NFAT"/>
    <property type="match status" value="1"/>
</dbReference>
<dbReference type="CDD" id="cd07881">
    <property type="entry name" value="RHD-n_NFAT"/>
    <property type="match status" value="1"/>
</dbReference>
<dbReference type="FunFam" id="2.60.40.10:FF:000040">
    <property type="entry name" value="Nuclear factor of activated T-cells, cytoplasmic, calcineurin-dependent 2"/>
    <property type="match status" value="1"/>
</dbReference>
<dbReference type="FunFam" id="2.60.40.340:FF:000001">
    <property type="entry name" value="Nuclear factor of activated T-cells, cytoplasmic, calcineurin-dependent 2"/>
    <property type="match status" value="1"/>
</dbReference>
<dbReference type="Gene3D" id="2.60.40.10">
    <property type="entry name" value="Immunoglobulins"/>
    <property type="match status" value="1"/>
</dbReference>
<dbReference type="Gene3D" id="2.60.40.340">
    <property type="entry name" value="Rel homology domain (RHD), DNA-binding domain"/>
    <property type="match status" value="1"/>
</dbReference>
<dbReference type="IDEAL" id="IID00466"/>
<dbReference type="InterPro" id="IPR013783">
    <property type="entry name" value="Ig-like_fold"/>
</dbReference>
<dbReference type="InterPro" id="IPR014756">
    <property type="entry name" value="Ig_E-set"/>
</dbReference>
<dbReference type="InterPro" id="IPR002909">
    <property type="entry name" value="IPT_dom"/>
</dbReference>
<dbReference type="InterPro" id="IPR008366">
    <property type="entry name" value="NFAT"/>
</dbReference>
<dbReference type="InterPro" id="IPR008967">
    <property type="entry name" value="p53-like_TF_DNA-bd_sf"/>
</dbReference>
<dbReference type="InterPro" id="IPR032397">
    <property type="entry name" value="RHD_dimer"/>
</dbReference>
<dbReference type="InterPro" id="IPR011539">
    <property type="entry name" value="RHD_DNA_bind_dom"/>
</dbReference>
<dbReference type="InterPro" id="IPR037059">
    <property type="entry name" value="RHD_DNA_bind_dom_sf"/>
</dbReference>
<dbReference type="PANTHER" id="PTHR12533">
    <property type="entry name" value="NFAT"/>
    <property type="match status" value="1"/>
</dbReference>
<dbReference type="PANTHER" id="PTHR12533:SF6">
    <property type="entry name" value="NUCLEAR FACTOR OF ACTIVATED T-CELLS, CYTOPLASMIC 3"/>
    <property type="match status" value="1"/>
</dbReference>
<dbReference type="Pfam" id="PF16179">
    <property type="entry name" value="RHD_dimer"/>
    <property type="match status" value="1"/>
</dbReference>
<dbReference type="Pfam" id="PF00554">
    <property type="entry name" value="RHD_DNA_bind"/>
    <property type="match status" value="1"/>
</dbReference>
<dbReference type="PRINTS" id="PR01789">
    <property type="entry name" value="NUCFACTORATC"/>
</dbReference>
<dbReference type="SMART" id="SM00429">
    <property type="entry name" value="IPT"/>
    <property type="match status" value="1"/>
</dbReference>
<dbReference type="SUPFAM" id="SSF81296">
    <property type="entry name" value="E set domains"/>
    <property type="match status" value="1"/>
</dbReference>
<dbReference type="SUPFAM" id="SSF49417">
    <property type="entry name" value="p53-like transcription factors"/>
    <property type="match status" value="1"/>
</dbReference>
<dbReference type="PROSITE" id="PS50254">
    <property type="entry name" value="REL_2"/>
    <property type="match status" value="1"/>
</dbReference>
<proteinExistence type="evidence at protein level"/>
<name>NFAC3_HUMAN</name>
<organism>
    <name type="scientific">Homo sapiens</name>
    <name type="common">Human</name>
    <dbReference type="NCBI Taxonomy" id="9606"/>
    <lineage>
        <taxon>Eukaryota</taxon>
        <taxon>Metazoa</taxon>
        <taxon>Chordata</taxon>
        <taxon>Craniata</taxon>
        <taxon>Vertebrata</taxon>
        <taxon>Euteleostomi</taxon>
        <taxon>Mammalia</taxon>
        <taxon>Eutheria</taxon>
        <taxon>Euarchontoglires</taxon>
        <taxon>Primates</taxon>
        <taxon>Haplorrhini</taxon>
        <taxon>Catarrhini</taxon>
        <taxon>Hominidae</taxon>
        <taxon>Homo</taxon>
    </lineage>
</organism>